<name>VATB2_HUMAN</name>
<comment type="function">
    <text evidence="1 7 8">Non-catalytic subunit of the V1 complex of vacuolar(H+)-ATPase (V-ATPase), a multisubunit enzyme composed of a peripheral complex (V1) that hydrolyzes ATP and a membrane integral complex (V0) that translocates protons (PubMed:33065002). V-ATPase is responsible for acidifying and maintaining the pH of intracellular compartments and in some cell types, is targeted to the plasma membrane, where it is responsible for acidifying the extracellular environment (PubMed:32001091). In renal intercalated cells, can partially compensate the lack of ATP6V1B1 and mediate secretion of protons (H+) into the urine under base-line conditions but not in conditions of acid load (By similarity).</text>
</comment>
<comment type="subunit">
    <text evidence="7">V-ATPase is a heteromultimeric enzyme made up of two complexes: the ATP-hydrolytic V1 complex and the proton translocation V0 complex (PubMed:33065002). The V1 complex consists of three catalytic AB heterodimers that form a heterohexamer, three peripheral stalks each consisting of EG heterodimers, one central rotor including subunits D and F, and the regulatory subunits C and H (PubMed:33065002). The proton translocation complex V0 consists of the proton transport subunit a, a ring of proteolipid subunits c9c'', rotary subunit d, subunits e and f, and the accessory subunits ATP6AP1/Ac45 and ATP6AP2/PRR (PubMed:33065002).</text>
</comment>
<comment type="interaction">
    <interactant intactId="EBI-4290814">
        <id>P21281</id>
    </interactant>
    <interactant intactId="EBI-744302">
        <id>P14136</id>
        <label>GFAP</label>
    </interactant>
    <organismsDiffer>false</organismsDiffer>
    <experiments>3</experiments>
</comment>
<comment type="interaction">
    <interactant intactId="EBI-4290814">
        <id>P21281</id>
    </interactant>
    <interactant intactId="EBI-466029">
        <id>P42858</id>
        <label>HTT</label>
    </interactant>
    <organismsDiffer>false</organismsDiffer>
    <experiments>3</experiments>
</comment>
<comment type="interaction">
    <interactant intactId="EBI-4290814">
        <id>P21281</id>
    </interactant>
    <interactant intactId="EBI-1055254">
        <id>Q8WXH2</id>
        <label>JPH3</label>
    </interactant>
    <organismsDiffer>false</organismsDiffer>
    <experiments>3</experiments>
</comment>
<comment type="interaction">
    <interactant intactId="EBI-4290814">
        <id>P21281</id>
    </interactant>
    <interactant intactId="EBI-475646">
        <id>P07196</id>
        <label>NEFL</label>
    </interactant>
    <organismsDiffer>false</organismsDiffer>
    <experiments>3</experiments>
</comment>
<comment type="interaction">
    <interactant intactId="EBI-4290814">
        <id>P21281</id>
    </interactant>
    <interactant intactId="EBI-396669">
        <id>Q9Y3C5</id>
        <label>RNF11</label>
    </interactant>
    <organismsDiffer>false</organismsDiffer>
    <experiments>3</experiments>
</comment>
<comment type="interaction">
    <interactant intactId="EBI-4290814">
        <id>P21281</id>
    </interactant>
    <interactant intactId="EBI-533224">
        <id>P15884</id>
        <label>TCF4</label>
    </interactant>
    <organismsDiffer>false</organismsDiffer>
    <experiments>3</experiments>
</comment>
<comment type="interaction">
    <interactant intactId="EBI-4290814">
        <id>P21281</id>
    </interactant>
    <interactant intactId="EBI-720609">
        <id>O76024</id>
        <label>WFS1</label>
    </interactant>
    <organismsDiffer>false</organismsDiffer>
    <experiments>3</experiments>
</comment>
<comment type="interaction">
    <interactant intactId="EBI-4290814">
        <id>P21281</id>
    </interactant>
    <interactant intactId="EBI-25475859">
        <id>PRO_0000449620</id>
        <label>rep</label>
        <dbReference type="UniProtKB" id="P0DTD1"/>
    </interactant>
    <organismsDiffer>true</organismsDiffer>
    <experiments>2</experiments>
</comment>
<comment type="subcellular location">
    <subcellularLocation>
        <location evidence="6">Apical cell membrane</location>
    </subcellularLocation>
    <subcellularLocation>
        <location evidence="3">Melanosome</location>
    </subcellularLocation>
    <subcellularLocation>
        <location evidence="1">Cytoplasm</location>
    </subcellularLocation>
    <subcellularLocation>
        <location evidence="2">Cytoplasmic vesicle</location>
        <location evidence="2">Secretory vesicle</location>
        <location evidence="2">Synaptic vesicle membrane</location>
        <topology evidence="9">Peripheral membrane protein</topology>
    </subcellularLocation>
    <subcellularLocation>
        <location evidence="2">Cytoplasmic vesicle</location>
        <location evidence="2">Clathrin-coated vesicle membrane</location>
        <topology evidence="9">Peripheral membrane protein</topology>
    </subcellularLocation>
    <text evidence="3">Identified by mass spectrometry in melanosome fractions from stage I to stage IV.</text>
</comment>
<comment type="tissue specificity">
    <text evidence="6">Kidney; localizes to early distal nephron, encompassing thick ascending limbs and distal convoluted tubules (at protein level).</text>
</comment>
<comment type="disease" evidence="5">
    <disease id="DI-04478">
        <name>Zimmermann-Laband syndrome 2</name>
        <acronym>ZLS2</acronym>
        <description>A form of Zimmermann-Laband syndrome, a rare developmental disorder characterized by facial dysmorphism with bulbous nose and thick floppy ears, gingival enlargement, hypoplasia or aplasia of terminal phalanges and nails, hypertrichosis, joint hyperextensibility, and hepatosplenomegaly. Some patients manifest intellectual disability with or without epilepsy. ZLS2 inheritance is autosomal dominant.</description>
        <dbReference type="MIM" id="616455"/>
    </disease>
    <text>The disease is caused by variants affecting the gene represented in this entry.</text>
</comment>
<comment type="disease" evidence="4">
    <disease id="DI-04735">
        <name>Deafness, congenital, with onychodystrophy, autosomal dominant</name>
        <acronym>DDOD</acronym>
        <description>An autosomal dominant syndrome characterized mainly by congenital sensorineural hearing loss accompanied by dystrophic or absent nails. Coniform teeth, selective tooth agenesis, and hands and feet abnormalities are present in some patients.</description>
        <dbReference type="MIM" id="124480"/>
    </disease>
    <text>The disease is caused by variants affecting the gene represented in this entry.</text>
</comment>
<comment type="similarity">
    <text evidence="9">Belongs to the ATPase alpha/beta chains family.</text>
</comment>
<sequence>MALRAMRGIVNGAAPELPVPTGGPAVGAREQALAVSRNYLSQPRLTYKTVSGVNGPLVILDHVKFPRYAEIVHLTLPDGTKRSGQVLEVSGSKAVVQVFEGTSGIDAKKTSCEFTGDILRTPVSEDMLGRVFNGSGKPIDRGPVVLAEDFLDIMGQPINPQCRIYPEEMIQTGISAIDGMNSIARGQKIPIFSAAGLPHNEIAAQICRQAGLVKKSKDVVDYSEENFAIVFAAMGVNMETARFFKSDFEENGSMDNVCLFLNLANDPTIERIITPRLALTTAEFLAYQCEKHVLVILTDMSSYAEALREVSAAREEVPGRRGFPGYMYTDLATIYERAGRVEGRNGSITQIPILTMPNDDITHPIPDLTGYITEGQIYVDRQLHNRQIYPPINVLPSLSRLMKSAIGEGMTRKDHADVSNQLYACYAIGKDVQAMKAVVGEEALTSDDLLYLEFLQKFERNFIAQGPYENRTVFETLDIGWQLLRIFPKEMLKRIPQSTLSEFYPRDSAKH</sequence>
<evidence type="ECO:0000250" key="1">
    <source>
        <dbReference type="UniProtKB" id="P62814"/>
    </source>
</evidence>
<evidence type="ECO:0000250" key="2">
    <source>
        <dbReference type="UniProtKB" id="P62815"/>
    </source>
</evidence>
<evidence type="ECO:0000269" key="3">
    <source>
    </source>
</evidence>
<evidence type="ECO:0000269" key="4">
    <source>
    </source>
</evidence>
<evidence type="ECO:0000269" key="5">
    <source>
    </source>
</evidence>
<evidence type="ECO:0000269" key="6">
    <source>
    </source>
</evidence>
<evidence type="ECO:0000269" key="7">
    <source>
    </source>
</evidence>
<evidence type="ECO:0000303" key="8">
    <source>
    </source>
</evidence>
<evidence type="ECO:0000305" key="9"/>
<evidence type="ECO:0000305" key="10">
    <source>
    </source>
</evidence>
<evidence type="ECO:0000312" key="11">
    <source>
        <dbReference type="PDB" id="6WLZ"/>
    </source>
</evidence>
<evidence type="ECO:0007744" key="12">
    <source>
        <dbReference type="PDB" id="6WLZ"/>
    </source>
</evidence>
<evidence type="ECO:0007744" key="13">
    <source>
        <dbReference type="PDB" id="6WM2"/>
    </source>
</evidence>
<evidence type="ECO:0007744" key="14">
    <source>
        <dbReference type="PDB" id="6WM3"/>
    </source>
</evidence>
<evidence type="ECO:0007744" key="15">
    <source>
        <dbReference type="PDB" id="6WM4"/>
    </source>
</evidence>
<evidence type="ECO:0007829" key="16">
    <source>
        <dbReference type="PDB" id="6WLZ"/>
    </source>
</evidence>
<evidence type="ECO:0007829" key="17">
    <source>
        <dbReference type="PDB" id="6WM3"/>
    </source>
</evidence>
<reference key="1">
    <citation type="journal article" date="1992" name="Proc. Natl. Acad. Sci. U.S.A.">
        <title>Selectively amplified expression of an isoform of the vacuolar H(+)-ATPase 56-kilodalton subunit in renal intercalated cells.</title>
        <authorList>
            <person name="Nelson R.D."/>
            <person name="Guo X.-L."/>
            <person name="Masood K."/>
            <person name="Brown D."/>
            <person name="Kalkbrenner M."/>
            <person name="Gluck S."/>
        </authorList>
    </citation>
    <scope>NUCLEOTIDE SEQUENCE [MRNA]</scope>
    <source>
        <tissue>Kidney</tissue>
    </source>
</reference>
<reference key="2">
    <citation type="journal article" date="1994" name="Biochem. J.">
        <title>Heterogeneity of vacuolar H(+)-ATPase: differential expression of two human subunit B isoforms.</title>
        <authorList>
            <person name="van Hille B."/>
            <person name="Richener H."/>
            <person name="Schmid P."/>
            <person name="Puettner I."/>
            <person name="Green J.R."/>
            <person name="Bilbe G."/>
        </authorList>
    </citation>
    <scope>NUCLEOTIDE SEQUENCE [MRNA]</scope>
</reference>
<reference key="3">
    <citation type="journal article" date="2004" name="Nat. Genet.">
        <title>Complete sequencing and characterization of 21,243 full-length human cDNAs.</title>
        <authorList>
            <person name="Ota T."/>
            <person name="Suzuki Y."/>
            <person name="Nishikawa T."/>
            <person name="Otsuki T."/>
            <person name="Sugiyama T."/>
            <person name="Irie R."/>
            <person name="Wakamatsu A."/>
            <person name="Hayashi K."/>
            <person name="Sato H."/>
            <person name="Nagai K."/>
            <person name="Kimura K."/>
            <person name="Makita H."/>
            <person name="Sekine M."/>
            <person name="Obayashi M."/>
            <person name="Nishi T."/>
            <person name="Shibahara T."/>
            <person name="Tanaka T."/>
            <person name="Ishii S."/>
            <person name="Yamamoto J."/>
            <person name="Saito K."/>
            <person name="Kawai Y."/>
            <person name="Isono Y."/>
            <person name="Nakamura Y."/>
            <person name="Nagahari K."/>
            <person name="Murakami K."/>
            <person name="Yasuda T."/>
            <person name="Iwayanagi T."/>
            <person name="Wagatsuma M."/>
            <person name="Shiratori A."/>
            <person name="Sudo H."/>
            <person name="Hosoiri T."/>
            <person name="Kaku Y."/>
            <person name="Kodaira H."/>
            <person name="Kondo H."/>
            <person name="Sugawara M."/>
            <person name="Takahashi M."/>
            <person name="Kanda K."/>
            <person name="Yokoi T."/>
            <person name="Furuya T."/>
            <person name="Kikkawa E."/>
            <person name="Omura Y."/>
            <person name="Abe K."/>
            <person name="Kamihara K."/>
            <person name="Katsuta N."/>
            <person name="Sato K."/>
            <person name="Tanikawa M."/>
            <person name="Yamazaki M."/>
            <person name="Ninomiya K."/>
            <person name="Ishibashi T."/>
            <person name="Yamashita H."/>
            <person name="Murakawa K."/>
            <person name="Fujimori K."/>
            <person name="Tanai H."/>
            <person name="Kimata M."/>
            <person name="Watanabe M."/>
            <person name="Hiraoka S."/>
            <person name="Chiba Y."/>
            <person name="Ishida S."/>
            <person name="Ono Y."/>
            <person name="Takiguchi S."/>
            <person name="Watanabe S."/>
            <person name="Yosida M."/>
            <person name="Hotuta T."/>
            <person name="Kusano J."/>
            <person name="Kanehori K."/>
            <person name="Takahashi-Fujii A."/>
            <person name="Hara H."/>
            <person name="Tanase T.-O."/>
            <person name="Nomura Y."/>
            <person name="Togiya S."/>
            <person name="Komai F."/>
            <person name="Hara R."/>
            <person name="Takeuchi K."/>
            <person name="Arita M."/>
            <person name="Imose N."/>
            <person name="Musashino K."/>
            <person name="Yuuki H."/>
            <person name="Oshima A."/>
            <person name="Sasaki N."/>
            <person name="Aotsuka S."/>
            <person name="Yoshikawa Y."/>
            <person name="Matsunawa H."/>
            <person name="Ichihara T."/>
            <person name="Shiohata N."/>
            <person name="Sano S."/>
            <person name="Moriya S."/>
            <person name="Momiyama H."/>
            <person name="Satoh N."/>
            <person name="Takami S."/>
            <person name="Terashima Y."/>
            <person name="Suzuki O."/>
            <person name="Nakagawa S."/>
            <person name="Senoh A."/>
            <person name="Mizoguchi H."/>
            <person name="Goto Y."/>
            <person name="Shimizu F."/>
            <person name="Wakebe H."/>
            <person name="Hishigaki H."/>
            <person name="Watanabe T."/>
            <person name="Sugiyama A."/>
            <person name="Takemoto M."/>
            <person name="Kawakami B."/>
            <person name="Yamazaki M."/>
            <person name="Watanabe K."/>
            <person name="Kumagai A."/>
            <person name="Itakura S."/>
            <person name="Fukuzumi Y."/>
            <person name="Fujimori Y."/>
            <person name="Komiyama M."/>
            <person name="Tashiro H."/>
            <person name="Tanigami A."/>
            <person name="Fujiwara T."/>
            <person name="Ono T."/>
            <person name="Yamada K."/>
            <person name="Fujii Y."/>
            <person name="Ozaki K."/>
            <person name="Hirao M."/>
            <person name="Ohmori Y."/>
            <person name="Kawabata A."/>
            <person name="Hikiji T."/>
            <person name="Kobatake N."/>
            <person name="Inagaki H."/>
            <person name="Ikema Y."/>
            <person name="Okamoto S."/>
            <person name="Okitani R."/>
            <person name="Kawakami T."/>
            <person name="Noguchi S."/>
            <person name="Itoh T."/>
            <person name="Shigeta K."/>
            <person name="Senba T."/>
            <person name="Matsumura K."/>
            <person name="Nakajima Y."/>
            <person name="Mizuno T."/>
            <person name="Morinaga M."/>
            <person name="Sasaki M."/>
            <person name="Togashi T."/>
            <person name="Oyama M."/>
            <person name="Hata H."/>
            <person name="Watanabe M."/>
            <person name="Komatsu T."/>
            <person name="Mizushima-Sugano J."/>
            <person name="Satoh T."/>
            <person name="Shirai Y."/>
            <person name="Takahashi Y."/>
            <person name="Nakagawa K."/>
            <person name="Okumura K."/>
            <person name="Nagase T."/>
            <person name="Nomura N."/>
            <person name="Kikuchi H."/>
            <person name="Masuho Y."/>
            <person name="Yamashita R."/>
            <person name="Nakai K."/>
            <person name="Yada T."/>
            <person name="Nakamura Y."/>
            <person name="Ohara O."/>
            <person name="Isogai T."/>
            <person name="Sugano S."/>
        </authorList>
    </citation>
    <scope>NUCLEOTIDE SEQUENCE [LARGE SCALE MRNA]</scope>
    <source>
        <tissue>Amygdala</tissue>
    </source>
</reference>
<reference key="4">
    <citation type="submission" date="2005-09" db="EMBL/GenBank/DDBJ databases">
        <authorList>
            <person name="Mural R.J."/>
            <person name="Istrail S."/>
            <person name="Sutton G.G."/>
            <person name="Florea L."/>
            <person name="Halpern A.L."/>
            <person name="Mobarry C.M."/>
            <person name="Lippert R."/>
            <person name="Walenz B."/>
            <person name="Shatkay H."/>
            <person name="Dew I."/>
            <person name="Miller J.R."/>
            <person name="Flanigan M.J."/>
            <person name="Edwards N.J."/>
            <person name="Bolanos R."/>
            <person name="Fasulo D."/>
            <person name="Halldorsson B.V."/>
            <person name="Hannenhalli S."/>
            <person name="Turner R."/>
            <person name="Yooseph S."/>
            <person name="Lu F."/>
            <person name="Nusskern D.R."/>
            <person name="Shue B.C."/>
            <person name="Zheng X.H."/>
            <person name="Zhong F."/>
            <person name="Delcher A.L."/>
            <person name="Huson D.H."/>
            <person name="Kravitz S.A."/>
            <person name="Mouchard L."/>
            <person name="Reinert K."/>
            <person name="Remington K.A."/>
            <person name="Clark A.G."/>
            <person name="Waterman M.S."/>
            <person name="Eichler E.E."/>
            <person name="Adams M.D."/>
            <person name="Hunkapiller M.W."/>
            <person name="Myers E.W."/>
            <person name="Venter J.C."/>
        </authorList>
    </citation>
    <scope>NUCLEOTIDE SEQUENCE [LARGE SCALE GENOMIC DNA]</scope>
</reference>
<reference key="5">
    <citation type="journal article" date="2004" name="Genome Res.">
        <title>The status, quality, and expansion of the NIH full-length cDNA project: the Mammalian Gene Collection (MGC).</title>
        <authorList>
            <consortium name="The MGC Project Team"/>
        </authorList>
    </citation>
    <scope>NUCLEOTIDE SEQUENCE [LARGE SCALE MRNA]</scope>
    <source>
        <tissue>Brain</tissue>
        <tissue>Eye</tissue>
    </source>
</reference>
<reference key="6">
    <citation type="journal article" date="1995" name="J. Biol. Chem.">
        <title>Transcriptional regulation of the vacuolar H(+)-ATPase B2 subunit gene in differentiating THP-1 cells.</title>
        <authorList>
            <person name="Lee B.S."/>
            <person name="Underhill D.M."/>
            <person name="Crane M.K."/>
            <person name="Gluck S.L."/>
        </authorList>
    </citation>
    <scope>NUCLEOTIDE SEQUENCE [GENOMIC DNA] OF 1-45</scope>
</reference>
<reference key="7">
    <citation type="journal article" date="1990" name="J. Biol. Chem.">
        <title>An mRNA from human brain encodes an isoform of the B subunit of the vacuolar H(+)-ATPase.</title>
        <authorList>
            <person name="Bernasconi P."/>
            <person name="Rausch T."/>
            <person name="Struve I."/>
            <person name="Morgan L."/>
            <person name="Taiz L."/>
        </authorList>
    </citation>
    <scope>NUCLEOTIDE SEQUENCE [MRNA] OF 106-511</scope>
    <source>
        <tissue>Brain</tissue>
    </source>
</reference>
<reference key="8">
    <citation type="journal article" date="2003" name="J. Proteome Res.">
        <title>Proteomic analysis of early melanosomes: identification of novel melanosomal proteins.</title>
        <authorList>
            <person name="Basrur V."/>
            <person name="Yang F."/>
            <person name="Kushimoto T."/>
            <person name="Higashimoto Y."/>
            <person name="Yasumoto K."/>
            <person name="Valencia J."/>
            <person name="Muller J."/>
            <person name="Vieira W.D."/>
            <person name="Watabe H."/>
            <person name="Shabanowitz J."/>
            <person name="Hearing V.J."/>
            <person name="Hunt D.F."/>
            <person name="Appella E."/>
        </authorList>
    </citation>
    <scope>SUBCELLULAR LOCATION [LARGE SCALE ANALYSIS]</scope>
    <source>
        <tissue>Melanoma</tissue>
    </source>
</reference>
<reference key="9">
    <citation type="journal article" date="2006" name="J. Proteome Res.">
        <title>Proteomic and bioinformatic characterization of the biogenesis and function of melanosomes.</title>
        <authorList>
            <person name="Chi A."/>
            <person name="Valencia J.C."/>
            <person name="Hu Z.-Z."/>
            <person name="Watabe H."/>
            <person name="Yamaguchi H."/>
            <person name="Mangini N.J."/>
            <person name="Huang H."/>
            <person name="Canfield V.A."/>
            <person name="Cheng K.C."/>
            <person name="Yang F."/>
            <person name="Abe R."/>
            <person name="Yamagishi S."/>
            <person name="Shabanowitz J."/>
            <person name="Hearing V.J."/>
            <person name="Wu C."/>
            <person name="Appella E."/>
            <person name="Hunt D.F."/>
        </authorList>
    </citation>
    <scope>SUBCELLULAR LOCATION [LARGE SCALE ANALYSIS]</scope>
    <source>
        <tissue>Melanoma</tissue>
    </source>
</reference>
<reference key="10">
    <citation type="journal article" date="2011" name="BMC Syst. Biol.">
        <title>Initial characterization of the human central proteome.</title>
        <authorList>
            <person name="Burkard T.R."/>
            <person name="Planyavsky M."/>
            <person name="Kaupe I."/>
            <person name="Breitwieser F.P."/>
            <person name="Buerckstuemmer T."/>
            <person name="Bennett K.L."/>
            <person name="Superti-Furga G."/>
            <person name="Colinge J."/>
        </authorList>
    </citation>
    <scope>IDENTIFICATION BY MASS SPECTROMETRY [LARGE SCALE ANALYSIS]</scope>
</reference>
<reference key="11">
    <citation type="journal article" date="2014" name="Cell Res.">
        <title>De novo mutation in ATP6V1B2 impairs lysosome acidification and causes dominant deafness-onychodystrophy syndrome.</title>
        <authorList>
            <person name="Yuan Y."/>
            <person name="Zhang J."/>
            <person name="Chang Q."/>
            <person name="Zeng J."/>
            <person name="Xin F."/>
            <person name="Wang J."/>
            <person name="Zhu Q."/>
            <person name="Wu J."/>
            <person name="Lu J."/>
            <person name="Guo W."/>
            <person name="Yan X."/>
            <person name="Jiang H."/>
            <person name="Zhou B."/>
            <person name="Li Q."/>
            <person name="Gao X."/>
            <person name="Yuan H."/>
            <person name="Yang S."/>
            <person name="Han D."/>
            <person name="Mao Z."/>
            <person name="Chen P."/>
            <person name="Lin X."/>
            <person name="Dai P."/>
        </authorList>
    </citation>
    <scope>INVOLVEMENT IN DDOD</scope>
</reference>
<reference key="12">
    <citation type="journal article" date="2015" name="Nat. Genet.">
        <title>Mutations in KCNH1 and ATP6V1B2 cause Zimmermann-Laband syndrome.</title>
        <authorList>
            <person name="Kortuem F."/>
            <person name="Caputo V."/>
            <person name="Bauer C.K."/>
            <person name="Stella L."/>
            <person name="Ciolfi A."/>
            <person name="Alawi M."/>
            <person name="Bocchinfuso G."/>
            <person name="Flex E."/>
            <person name="Paolacci S."/>
            <person name="Dentici M.L."/>
            <person name="Grammatico P."/>
            <person name="Korenke G.C."/>
            <person name="Leuzzi V."/>
            <person name="Mowat D."/>
            <person name="Nair L.D."/>
            <person name="Nguyen T.T."/>
            <person name="Thierry P."/>
            <person name="White S.M."/>
            <person name="Dallapiccola B."/>
            <person name="Pizzuti A."/>
            <person name="Campeau P.M."/>
            <person name="Tartaglia M."/>
            <person name="Kutsche K."/>
        </authorList>
    </citation>
    <scope>INVOLVEMENT IN ZLS2</scope>
    <scope>VARIANT ZLS2 PRO-485</scope>
</reference>
<reference key="13">
    <citation type="journal article" date="2015" name="Proteomics">
        <title>N-terminome analysis of the human mitochondrial proteome.</title>
        <authorList>
            <person name="Vaca Jacome A.S."/>
            <person name="Rabilloud T."/>
            <person name="Schaeffer-Reiss C."/>
            <person name="Rompais M."/>
            <person name="Ayoub D."/>
            <person name="Lane L."/>
            <person name="Bairoch A."/>
            <person name="Van Dorsselaer A."/>
            <person name="Carapito C."/>
        </authorList>
    </citation>
    <scope>IDENTIFICATION BY MASS SPECTROMETRY [LARGE SCALE ANALYSIS]</scope>
</reference>
<reference key="14">
    <citation type="journal article" date="2018" name="Am. J. Physiol.">
        <title>H+-ATPase B1 subunit localizes to thick ascending limb and distal convoluted tubule of rodent and human kidney.</title>
        <authorList>
            <person name="Frische S."/>
            <person name="Chambrey R."/>
            <person name="Trepiccione F."/>
            <person name="Zamani R."/>
            <person name="Marcussen N."/>
            <person name="Alexander R.T."/>
            <person name="Skjoedt K."/>
            <person name="Svenningsen P."/>
            <person name="Dimke H."/>
        </authorList>
    </citation>
    <scope>SUBCELLULAR LOCATION</scope>
    <scope>TISSUE SPECIFICITY</scope>
</reference>
<reference key="15">
    <citation type="journal article" date="2020" name="Trends Biochem. Sci.">
        <title>Structure and Roles of V-type ATPases.</title>
        <authorList>
            <person name="Vasanthakumar T."/>
            <person name="Rubinstein J.L."/>
        </authorList>
    </citation>
    <scope>REVIEW</scope>
</reference>
<reference evidence="12 13 14 15" key="16">
    <citation type="journal article" date="2020" name="Mol. Cell">
        <title>Structures of a Complete Human V-ATPase Reveal Mechanisms of Its Assembly.</title>
        <authorList>
            <person name="Wang L."/>
            <person name="Wu D."/>
            <person name="Robinson C.V."/>
            <person name="Wu H."/>
            <person name="Fu T.M."/>
        </authorList>
    </citation>
    <scope>STRUCTURE BY ELECTRON MICROSCOPY (2.90 ANGSTROMS) IN COMPLEX WITH ADP</scope>
    <scope>FUNCTION</scope>
    <scope>IDENTIFICATION IN THE V-ATPASE COMPLEX</scope>
</reference>
<feature type="chain" id="PRO_0000144626" description="V-type proton ATPase subunit B, brain isoform">
    <location>
        <begin position="1"/>
        <end position="511"/>
    </location>
</feature>
<feature type="binding site" evidence="10 11 13 14 15">
    <location>
        <position position="400"/>
    </location>
    <ligand>
        <name>ATP</name>
        <dbReference type="ChEBI" id="CHEBI:30616"/>
    </ligand>
</feature>
<feature type="sequence variant" id="VAR_073962" description="In ZLS2; dbSNP:rs730882177." evidence="5">
    <original>R</original>
    <variation>P</variation>
    <location>
        <position position="485"/>
    </location>
</feature>
<feature type="sequence conflict" description="In Ref. 1; CAA44721." evidence="9" ref="1">
    <original>A</original>
    <variation>S</variation>
    <location>
        <position position="28"/>
    </location>
</feature>
<feature type="sequence conflict" description="In Ref. 5; AAH30640." evidence="9" ref="5">
    <original>R</original>
    <variation>Q</variation>
    <location>
        <position position="29"/>
    </location>
</feature>
<feature type="sequence conflict" description="In Ref. 5; AAH30640." evidence="9" ref="5">
    <original>Q</original>
    <variation>R</variation>
    <location>
        <position position="171"/>
    </location>
</feature>
<feature type="sequence conflict" description="In Ref. 5; AAH30640." evidence="9" ref="5">
    <original>E</original>
    <variation>G</variation>
    <location>
        <position position="342"/>
    </location>
</feature>
<feature type="sequence conflict" description="In Ref. 2; AAA58661." evidence="9" ref="2">
    <original>Q</original>
    <variation>L</variation>
    <location>
        <position position="376"/>
    </location>
</feature>
<feature type="sequence conflict" description="In Ref. 7; AAA35610." evidence="9" ref="7">
    <original>AC</original>
    <variation>RA</variation>
    <location>
        <begin position="424"/>
        <end position="425"/>
    </location>
</feature>
<feature type="sequence conflict" description="In Ref. 7; AAA35610." evidence="9" ref="7">
    <original>M</original>
    <variation>V</variation>
    <location>
        <position position="435"/>
    </location>
</feature>
<feature type="sequence conflict" description="In Ref. 7; AAA35610." evidence="9" ref="7">
    <original>KH</original>
    <variation>ND</variation>
    <location>
        <begin position="510"/>
        <end position="511"/>
    </location>
</feature>
<feature type="strand" evidence="16">
    <location>
        <begin position="45"/>
        <end position="47"/>
    </location>
</feature>
<feature type="strand" evidence="16">
    <location>
        <begin position="50"/>
        <end position="54"/>
    </location>
</feature>
<feature type="strand" evidence="16">
    <location>
        <begin position="57"/>
        <end position="60"/>
    </location>
</feature>
<feature type="strand" evidence="16">
    <location>
        <begin position="70"/>
        <end position="75"/>
    </location>
</feature>
<feature type="strand" evidence="16">
    <location>
        <begin position="77"/>
        <end position="79"/>
    </location>
</feature>
<feature type="strand" evidence="16">
    <location>
        <begin position="81"/>
        <end position="90"/>
    </location>
</feature>
<feature type="strand" evidence="16">
    <location>
        <begin position="93"/>
        <end position="98"/>
    </location>
</feature>
<feature type="strand" evidence="16">
    <location>
        <begin position="107"/>
        <end position="109"/>
    </location>
</feature>
<feature type="strand" evidence="16">
    <location>
        <begin position="111"/>
        <end position="118"/>
    </location>
</feature>
<feature type="strand" evidence="16">
    <location>
        <begin position="120"/>
        <end position="123"/>
    </location>
</feature>
<feature type="turn" evidence="16">
    <location>
        <begin position="126"/>
        <end position="129"/>
    </location>
</feature>
<feature type="strand" evidence="16">
    <location>
        <begin position="131"/>
        <end position="133"/>
    </location>
</feature>
<feature type="strand" evidence="16">
    <location>
        <begin position="148"/>
        <end position="152"/>
    </location>
</feature>
<feature type="helix" evidence="16">
    <location>
        <begin position="160"/>
        <end position="162"/>
    </location>
</feature>
<feature type="strand" evidence="16">
    <location>
        <begin position="169"/>
        <end position="171"/>
    </location>
</feature>
<feature type="helix" evidence="16">
    <location>
        <begin position="175"/>
        <end position="178"/>
    </location>
</feature>
<feature type="strand" evidence="16">
    <location>
        <begin position="191"/>
        <end position="193"/>
    </location>
</feature>
<feature type="strand" evidence="17">
    <location>
        <begin position="195"/>
        <end position="197"/>
    </location>
</feature>
<feature type="helix" evidence="16">
    <location>
        <begin position="199"/>
        <end position="209"/>
    </location>
</feature>
<feature type="helix" evidence="17">
    <location>
        <begin position="217"/>
        <end position="223"/>
    </location>
</feature>
<feature type="strand" evidence="16">
    <location>
        <begin position="228"/>
        <end position="236"/>
    </location>
</feature>
<feature type="helix" evidence="16">
    <location>
        <begin position="238"/>
        <end position="250"/>
    </location>
</feature>
<feature type="helix" evidence="16">
    <location>
        <begin position="254"/>
        <end position="256"/>
    </location>
</feature>
<feature type="strand" evidence="16">
    <location>
        <begin position="257"/>
        <end position="263"/>
    </location>
</feature>
<feature type="helix" evidence="16">
    <location>
        <begin position="269"/>
        <end position="272"/>
    </location>
</feature>
<feature type="helix" evidence="16">
    <location>
        <begin position="274"/>
        <end position="287"/>
    </location>
</feature>
<feature type="strand" evidence="16">
    <location>
        <begin position="292"/>
        <end position="298"/>
    </location>
</feature>
<feature type="helix" evidence="16">
    <location>
        <begin position="300"/>
        <end position="312"/>
    </location>
</feature>
<feature type="turn" evidence="16">
    <location>
        <begin position="313"/>
        <end position="315"/>
    </location>
</feature>
<feature type="helix" evidence="16">
    <location>
        <begin position="320"/>
        <end position="322"/>
    </location>
</feature>
<feature type="helix" evidence="16">
    <location>
        <begin position="327"/>
        <end position="335"/>
    </location>
</feature>
<feature type="strand" evidence="16">
    <location>
        <begin position="339"/>
        <end position="341"/>
    </location>
</feature>
<feature type="strand" evidence="16">
    <location>
        <begin position="347"/>
        <end position="355"/>
    </location>
</feature>
<feature type="helix" evidence="16">
    <location>
        <begin position="357"/>
        <end position="359"/>
    </location>
</feature>
<feature type="helix" evidence="16">
    <location>
        <begin position="364"/>
        <end position="370"/>
    </location>
</feature>
<feature type="strand" evidence="16">
    <location>
        <begin position="373"/>
        <end position="379"/>
    </location>
</feature>
<feature type="helix" evidence="16">
    <location>
        <begin position="384"/>
        <end position="386"/>
    </location>
</feature>
<feature type="strand" evidence="16">
    <location>
        <begin position="394"/>
        <end position="396"/>
    </location>
</feature>
<feature type="turn" evidence="16">
    <location>
        <begin position="403"/>
        <end position="405"/>
    </location>
</feature>
<feature type="turn" evidence="16">
    <location>
        <begin position="408"/>
        <end position="410"/>
    </location>
</feature>
<feature type="helix" evidence="16">
    <location>
        <begin position="415"/>
        <end position="438"/>
    </location>
</feature>
<feature type="strand" evidence="16">
    <location>
        <begin position="441"/>
        <end position="443"/>
    </location>
</feature>
<feature type="helix" evidence="16">
    <location>
        <begin position="450"/>
        <end position="461"/>
    </location>
</feature>
<feature type="helix" evidence="16">
    <location>
        <begin position="473"/>
        <end position="484"/>
    </location>
</feature>
<feature type="helix" evidence="17">
    <location>
        <begin position="489"/>
        <end position="491"/>
    </location>
</feature>
<feature type="helix" evidence="16">
    <location>
        <begin position="497"/>
        <end position="503"/>
    </location>
</feature>
<accession>P21281</accession>
<accession>B2R5Z3</accession>
<accession>D3DSQ5</accession>
<accession>Q14544</accession>
<accession>Q15859</accession>
<accession>Q96IR0</accession>
<organism>
    <name type="scientific">Homo sapiens</name>
    <name type="common">Human</name>
    <dbReference type="NCBI Taxonomy" id="9606"/>
    <lineage>
        <taxon>Eukaryota</taxon>
        <taxon>Metazoa</taxon>
        <taxon>Chordata</taxon>
        <taxon>Craniata</taxon>
        <taxon>Vertebrata</taxon>
        <taxon>Euteleostomi</taxon>
        <taxon>Mammalia</taxon>
        <taxon>Eutheria</taxon>
        <taxon>Euarchontoglires</taxon>
        <taxon>Primates</taxon>
        <taxon>Haplorrhini</taxon>
        <taxon>Catarrhini</taxon>
        <taxon>Hominidae</taxon>
        <taxon>Homo</taxon>
    </lineage>
</organism>
<gene>
    <name type="primary">ATP6V1B2</name>
    <name type="synonym">ATP6B2</name>
    <name type="synonym">VPP3</name>
</gene>
<dbReference type="EMBL" id="M60346">
    <property type="protein sequence ID" value="AAA35610.1"/>
    <property type="molecule type" value="mRNA"/>
</dbReference>
<dbReference type="EMBL" id="L35249">
    <property type="protein sequence ID" value="AAA58661.1"/>
    <property type="molecule type" value="mRNA"/>
</dbReference>
<dbReference type="EMBL" id="AK312372">
    <property type="protein sequence ID" value="BAG35290.1"/>
    <property type="molecule type" value="mRNA"/>
</dbReference>
<dbReference type="EMBL" id="CH471080">
    <property type="protein sequence ID" value="EAW63758.1"/>
    <property type="molecule type" value="Genomic_DNA"/>
</dbReference>
<dbReference type="EMBL" id="CH471080">
    <property type="protein sequence ID" value="EAW63759.1"/>
    <property type="molecule type" value="Genomic_DNA"/>
</dbReference>
<dbReference type="EMBL" id="BC003100">
    <property type="protein sequence ID" value="AAH03100.1"/>
    <property type="molecule type" value="mRNA"/>
</dbReference>
<dbReference type="EMBL" id="BC007309">
    <property type="protein sequence ID" value="AAH07309.1"/>
    <property type="molecule type" value="mRNA"/>
</dbReference>
<dbReference type="EMBL" id="BC030640">
    <property type="protein sequence ID" value="AAH30640.1"/>
    <property type="molecule type" value="mRNA"/>
</dbReference>
<dbReference type="EMBL" id="Z37165">
    <property type="protein sequence ID" value="CAA85522.1"/>
    <property type="molecule type" value="Genomic_DNA"/>
</dbReference>
<dbReference type="EMBL" id="X62949">
    <property type="protein sequence ID" value="CAA44721.1"/>
    <property type="molecule type" value="mRNA"/>
</dbReference>
<dbReference type="CCDS" id="CCDS6014.1"/>
<dbReference type="PIR" id="B44138">
    <property type="entry name" value="B44138"/>
</dbReference>
<dbReference type="PIR" id="I39208">
    <property type="entry name" value="I39208"/>
</dbReference>
<dbReference type="RefSeq" id="NP_001684.2">
    <property type="nucleotide sequence ID" value="NM_001693.3"/>
</dbReference>
<dbReference type="PDB" id="6WLZ">
    <property type="method" value="EM"/>
    <property type="resolution" value="2.90 A"/>
    <property type="chains" value="D/E/F=1-511"/>
</dbReference>
<dbReference type="PDB" id="6WM2">
    <property type="method" value="EM"/>
    <property type="resolution" value="3.10 A"/>
    <property type="chains" value="D/E/F=1-511"/>
</dbReference>
<dbReference type="PDB" id="6WM3">
    <property type="method" value="EM"/>
    <property type="resolution" value="3.40 A"/>
    <property type="chains" value="D/E/F=1-511"/>
</dbReference>
<dbReference type="PDB" id="6WM4">
    <property type="method" value="EM"/>
    <property type="resolution" value="3.60 A"/>
    <property type="chains" value="D/E/F=1-511"/>
</dbReference>
<dbReference type="PDB" id="7U4T">
    <property type="method" value="EM"/>
    <property type="resolution" value="3.60 A"/>
    <property type="chains" value="D/E/F=1-511"/>
</dbReference>
<dbReference type="PDB" id="7UNF">
    <property type="method" value="EM"/>
    <property type="resolution" value="4.08 A"/>
    <property type="chains" value="O/P/Q=1-511"/>
</dbReference>
<dbReference type="PDBsum" id="6WLZ"/>
<dbReference type="PDBsum" id="6WM2"/>
<dbReference type="PDBsum" id="6WM3"/>
<dbReference type="PDBsum" id="6WM4"/>
<dbReference type="PDBsum" id="7U4T"/>
<dbReference type="PDBsum" id="7UNF"/>
<dbReference type="EMDB" id="EMD-21845"/>
<dbReference type="EMDB" id="EMD-21847"/>
<dbReference type="EMDB" id="EMD-21848"/>
<dbReference type="EMDB" id="EMD-21849"/>
<dbReference type="EMDB" id="EMD-26334"/>
<dbReference type="EMDB" id="EMD-26623"/>
<dbReference type="SMR" id="P21281"/>
<dbReference type="BioGRID" id="107009">
    <property type="interactions" value="251"/>
</dbReference>
<dbReference type="ComplexPortal" id="CPX-2470">
    <property type="entry name" value="Vacuolar proton translocating ATPase complex, ATP6V0A1 variant"/>
</dbReference>
<dbReference type="ComplexPortal" id="CPX-6904">
    <property type="entry name" value="Vacuolar proton translocating ATPase complex, ATP6V0A2 variant"/>
</dbReference>
<dbReference type="ComplexPortal" id="CPX-6905">
    <property type="entry name" value="Vacuolar proton translocating ATPase complex, ATP6V0A3 variant"/>
</dbReference>
<dbReference type="ComplexPortal" id="CPX-6912">
    <property type="entry name" value="Vacuolar proton translocating ATPase complex, ATP6V0A4 variant"/>
</dbReference>
<dbReference type="CORUM" id="P21281"/>
<dbReference type="DIP" id="DIP-47433N"/>
<dbReference type="FunCoup" id="P21281">
    <property type="interactions" value="2886"/>
</dbReference>
<dbReference type="IntAct" id="P21281">
    <property type="interactions" value="84"/>
</dbReference>
<dbReference type="MINT" id="P21281"/>
<dbReference type="STRING" id="9606.ENSP00000276390"/>
<dbReference type="BindingDB" id="P21281"/>
<dbReference type="ChEMBL" id="CHEMBL5641"/>
<dbReference type="DrugBank" id="DB07347">
    <property type="generic name" value="4-(2-Aminoethyl)Benzenesulfonyl Fluoride"/>
</dbReference>
<dbReference type="DrugBank" id="DB05260">
    <property type="generic name" value="Gallium nitrate"/>
</dbReference>
<dbReference type="DrugBank" id="DB01133">
    <property type="generic name" value="Tiludronic acid"/>
</dbReference>
<dbReference type="DrugCentral" id="P21281"/>
<dbReference type="GuidetoPHARMACOLOGY" id="812"/>
<dbReference type="TCDB" id="3.A.2.2.4">
    <property type="family name" value="the h+- or na+-translocating f-type, v-type and a-type atpase (f-atpase) superfamily"/>
</dbReference>
<dbReference type="GlyGen" id="P21281">
    <property type="glycosylation" value="1 site, 1 O-linked glycan (1 site)"/>
</dbReference>
<dbReference type="iPTMnet" id="P21281"/>
<dbReference type="MetOSite" id="P21281"/>
<dbReference type="PhosphoSitePlus" id="P21281"/>
<dbReference type="SwissPalm" id="P21281"/>
<dbReference type="BioMuta" id="ATP6V1B2"/>
<dbReference type="DMDM" id="12643271"/>
<dbReference type="REPRODUCTION-2DPAGE" id="IPI00007812"/>
<dbReference type="jPOST" id="P21281"/>
<dbReference type="MassIVE" id="P21281"/>
<dbReference type="PaxDb" id="9606-ENSP00000276390"/>
<dbReference type="PeptideAtlas" id="P21281"/>
<dbReference type="ProteomicsDB" id="53856"/>
<dbReference type="Pumba" id="P21281"/>
<dbReference type="Antibodypedia" id="9185">
    <property type="antibodies" value="252 antibodies from 31 providers"/>
</dbReference>
<dbReference type="DNASU" id="526"/>
<dbReference type="Ensembl" id="ENST00000276390.7">
    <property type="protein sequence ID" value="ENSP00000276390.2"/>
    <property type="gene ID" value="ENSG00000147416.12"/>
</dbReference>
<dbReference type="Ensembl" id="ENST00000718265.1">
    <property type="protein sequence ID" value="ENSP00000520705.1"/>
    <property type="gene ID" value="ENSG00000147416.12"/>
</dbReference>
<dbReference type="GeneID" id="526"/>
<dbReference type="KEGG" id="hsa:526"/>
<dbReference type="MANE-Select" id="ENST00000276390.7">
    <property type="protein sequence ID" value="ENSP00000276390.2"/>
    <property type="RefSeq nucleotide sequence ID" value="NM_001693.4"/>
    <property type="RefSeq protein sequence ID" value="NP_001684.2"/>
</dbReference>
<dbReference type="UCSC" id="uc003wzp.4">
    <property type="organism name" value="human"/>
</dbReference>
<dbReference type="AGR" id="HGNC:854"/>
<dbReference type="CTD" id="526"/>
<dbReference type="DisGeNET" id="526"/>
<dbReference type="GeneCards" id="ATP6V1B2"/>
<dbReference type="HGNC" id="HGNC:854">
    <property type="gene designation" value="ATP6V1B2"/>
</dbReference>
<dbReference type="HPA" id="ENSG00000147416">
    <property type="expression patterns" value="Low tissue specificity"/>
</dbReference>
<dbReference type="MalaCards" id="ATP6V1B2"/>
<dbReference type="MIM" id="124480">
    <property type="type" value="phenotype"/>
</dbReference>
<dbReference type="MIM" id="606939">
    <property type="type" value="gene"/>
</dbReference>
<dbReference type="MIM" id="616455">
    <property type="type" value="phenotype"/>
</dbReference>
<dbReference type="neXtProt" id="NX_P21281"/>
<dbReference type="OpenTargets" id="ENSG00000147416"/>
<dbReference type="Orphanet" id="79499">
    <property type="disease" value="Autosomal dominant deafness-onychodystrophy syndrome"/>
</dbReference>
<dbReference type="Orphanet" id="79500">
    <property type="disease" value="DOORS syndrome"/>
</dbReference>
<dbReference type="Orphanet" id="3473">
    <property type="disease" value="Zimmermann-Laband syndrome"/>
</dbReference>
<dbReference type="PharmGKB" id="PA25155"/>
<dbReference type="VEuPathDB" id="HostDB:ENSG00000147416"/>
<dbReference type="eggNOG" id="KOG1351">
    <property type="taxonomic scope" value="Eukaryota"/>
</dbReference>
<dbReference type="GeneTree" id="ENSGT00940000155068"/>
<dbReference type="HOGENOM" id="CLU_022916_3_0_1"/>
<dbReference type="InParanoid" id="P21281"/>
<dbReference type="OMA" id="EGFKIKP"/>
<dbReference type="OrthoDB" id="1735853at2759"/>
<dbReference type="PAN-GO" id="P21281">
    <property type="GO annotations" value="3 GO annotations based on evolutionary models"/>
</dbReference>
<dbReference type="PhylomeDB" id="P21281"/>
<dbReference type="TreeFam" id="TF300313"/>
<dbReference type="BioCyc" id="MetaCyc:HS07429-MONOMER"/>
<dbReference type="PathwayCommons" id="P21281"/>
<dbReference type="Reactome" id="R-HSA-1222556">
    <property type="pathway name" value="ROS and RNS production in phagocytes"/>
</dbReference>
<dbReference type="Reactome" id="R-HSA-77387">
    <property type="pathway name" value="Insulin receptor recycling"/>
</dbReference>
<dbReference type="Reactome" id="R-HSA-917977">
    <property type="pathway name" value="Transferrin endocytosis and recycling"/>
</dbReference>
<dbReference type="Reactome" id="R-HSA-9639288">
    <property type="pathway name" value="Amino acids regulate mTORC1"/>
</dbReference>
<dbReference type="Reactome" id="R-HSA-983712">
    <property type="pathway name" value="Ion channel transport"/>
</dbReference>
<dbReference type="Reactome" id="R-HSA-9857377">
    <property type="pathway name" value="Regulation of MITF-M-dependent genes involved in lysosome biogenesis and autophagy"/>
</dbReference>
<dbReference type="SignaLink" id="P21281"/>
<dbReference type="BioGRID-ORCS" id="526">
    <property type="hits" value="843 hits in 1187 CRISPR screens"/>
</dbReference>
<dbReference type="CD-CODE" id="FB4E32DD">
    <property type="entry name" value="Presynaptic clusters and postsynaptic densities"/>
</dbReference>
<dbReference type="ChiTaRS" id="ATP6V1B2">
    <property type="organism name" value="human"/>
</dbReference>
<dbReference type="GeneWiki" id="ATP6V1B2"/>
<dbReference type="GenomeRNAi" id="526"/>
<dbReference type="Pharos" id="P21281">
    <property type="development level" value="Tchem"/>
</dbReference>
<dbReference type="PRO" id="PR:P21281"/>
<dbReference type="Proteomes" id="UP000005640">
    <property type="component" value="Chromosome 8"/>
</dbReference>
<dbReference type="RNAct" id="P21281">
    <property type="molecule type" value="protein"/>
</dbReference>
<dbReference type="Bgee" id="ENSG00000147416">
    <property type="expression patterns" value="Expressed in pons and 206 other cell types or tissues"/>
</dbReference>
<dbReference type="ExpressionAtlas" id="P21281">
    <property type="expression patterns" value="baseline and differential"/>
</dbReference>
<dbReference type="GO" id="GO:0016324">
    <property type="term" value="C:apical plasma membrane"/>
    <property type="evidence" value="ECO:0000314"/>
    <property type="project" value="UniProtKB"/>
</dbReference>
<dbReference type="GO" id="GO:0030665">
    <property type="term" value="C:clathrin-coated vesicle membrane"/>
    <property type="evidence" value="ECO:0007669"/>
    <property type="project" value="UniProtKB-SubCell"/>
</dbReference>
<dbReference type="GO" id="GO:0005829">
    <property type="term" value="C:cytosol"/>
    <property type="evidence" value="ECO:0000250"/>
    <property type="project" value="UniProtKB"/>
</dbReference>
<dbReference type="GO" id="GO:0070062">
    <property type="term" value="C:extracellular exosome"/>
    <property type="evidence" value="ECO:0007005"/>
    <property type="project" value="UniProtKB"/>
</dbReference>
<dbReference type="GO" id="GO:0098850">
    <property type="term" value="C:extrinsic component of synaptic vesicle membrane"/>
    <property type="evidence" value="ECO:0007669"/>
    <property type="project" value="Ensembl"/>
</dbReference>
<dbReference type="GO" id="GO:0043231">
    <property type="term" value="C:intracellular membrane-bounded organelle"/>
    <property type="evidence" value="ECO:0000314"/>
    <property type="project" value="HPA"/>
</dbReference>
<dbReference type="GO" id="GO:0005765">
    <property type="term" value="C:lysosomal membrane"/>
    <property type="evidence" value="ECO:0007005"/>
    <property type="project" value="UniProtKB"/>
</dbReference>
<dbReference type="GO" id="GO:0042470">
    <property type="term" value="C:melanosome"/>
    <property type="evidence" value="ECO:0007669"/>
    <property type="project" value="UniProtKB-SubCell"/>
</dbReference>
<dbReference type="GO" id="GO:0005902">
    <property type="term" value="C:microvillus"/>
    <property type="evidence" value="ECO:0007669"/>
    <property type="project" value="Ensembl"/>
</dbReference>
<dbReference type="GO" id="GO:0005886">
    <property type="term" value="C:plasma membrane"/>
    <property type="evidence" value="ECO:0000250"/>
    <property type="project" value="UniProtKB"/>
</dbReference>
<dbReference type="GO" id="GO:0001726">
    <property type="term" value="C:ruffle"/>
    <property type="evidence" value="ECO:0007669"/>
    <property type="project" value="Ensembl"/>
</dbReference>
<dbReference type="GO" id="GO:0000221">
    <property type="term" value="C:vacuolar proton-transporting V-type ATPase, V1 domain"/>
    <property type="evidence" value="ECO:0000314"/>
    <property type="project" value="UniProtKB"/>
</dbReference>
<dbReference type="GO" id="GO:0005524">
    <property type="term" value="F:ATP binding"/>
    <property type="evidence" value="ECO:0007669"/>
    <property type="project" value="UniProtKB-KW"/>
</dbReference>
<dbReference type="GO" id="GO:0015078">
    <property type="term" value="F:proton transmembrane transporter activity"/>
    <property type="evidence" value="ECO:0000304"/>
    <property type="project" value="ProtInc"/>
</dbReference>
<dbReference type="GO" id="GO:0046961">
    <property type="term" value="F:proton-transporting ATPase activity, rotational mechanism"/>
    <property type="evidence" value="ECO:0000318"/>
    <property type="project" value="GO_Central"/>
</dbReference>
<dbReference type="GO" id="GO:0046034">
    <property type="term" value="P:ATP metabolic process"/>
    <property type="evidence" value="ECO:0007669"/>
    <property type="project" value="InterPro"/>
</dbReference>
<dbReference type="GO" id="GO:1902600">
    <property type="term" value="P:proton transmembrane transport"/>
    <property type="evidence" value="ECO:0000304"/>
    <property type="project" value="ProtInc"/>
</dbReference>
<dbReference type="GO" id="GO:0016241">
    <property type="term" value="P:regulation of macroautophagy"/>
    <property type="evidence" value="ECO:0000303"/>
    <property type="project" value="ParkinsonsUK-UCL"/>
</dbReference>
<dbReference type="GO" id="GO:0097401">
    <property type="term" value="P:synaptic vesicle lumen acidification"/>
    <property type="evidence" value="ECO:0007669"/>
    <property type="project" value="Ensembl"/>
</dbReference>
<dbReference type="GO" id="GO:0007035">
    <property type="term" value="P:vacuolar acidification"/>
    <property type="evidence" value="ECO:0000318"/>
    <property type="project" value="GO_Central"/>
</dbReference>
<dbReference type="CDD" id="cd18112">
    <property type="entry name" value="ATP-synt_V_A-type_beta_C"/>
    <property type="match status" value="1"/>
</dbReference>
<dbReference type="CDD" id="cd18118">
    <property type="entry name" value="ATP-synt_V_A-type_beta_N"/>
    <property type="match status" value="1"/>
</dbReference>
<dbReference type="CDD" id="cd01135">
    <property type="entry name" value="V_A-ATPase_B"/>
    <property type="match status" value="1"/>
</dbReference>
<dbReference type="FunFam" id="3.40.50.12240:FF:000001">
    <property type="entry name" value="V-type proton ATPase subunit B, brain"/>
    <property type="match status" value="1"/>
</dbReference>
<dbReference type="Gene3D" id="3.40.50.12240">
    <property type="match status" value="1"/>
</dbReference>
<dbReference type="HAMAP" id="MF_00310">
    <property type="entry name" value="ATP_synth_B_arch"/>
    <property type="match status" value="1"/>
</dbReference>
<dbReference type="InterPro" id="IPR055190">
    <property type="entry name" value="ATP-synt_VA_C"/>
</dbReference>
<dbReference type="InterPro" id="IPR020003">
    <property type="entry name" value="ATPase_a/bsu_AS"/>
</dbReference>
<dbReference type="InterPro" id="IPR004100">
    <property type="entry name" value="ATPase_F1/V1/A1_a/bsu_N"/>
</dbReference>
<dbReference type="InterPro" id="IPR000194">
    <property type="entry name" value="ATPase_F1/V1/A1_a/bsu_nucl-bd"/>
</dbReference>
<dbReference type="InterPro" id="IPR005723">
    <property type="entry name" value="ATPase_V1-cplx_bsu"/>
</dbReference>
<dbReference type="InterPro" id="IPR027417">
    <property type="entry name" value="P-loop_NTPase"/>
</dbReference>
<dbReference type="InterPro" id="IPR022879">
    <property type="entry name" value="V-ATPase_su_B/beta"/>
</dbReference>
<dbReference type="NCBIfam" id="NF003235">
    <property type="entry name" value="PRK04196.1"/>
    <property type="match status" value="1"/>
</dbReference>
<dbReference type="NCBIfam" id="TIGR01040">
    <property type="entry name" value="V-ATPase_V1_B"/>
    <property type="match status" value="1"/>
</dbReference>
<dbReference type="PANTHER" id="PTHR43389">
    <property type="entry name" value="V-TYPE PROTON ATPASE SUBUNIT B"/>
    <property type="match status" value="1"/>
</dbReference>
<dbReference type="PANTHER" id="PTHR43389:SF5">
    <property type="entry name" value="V-TYPE PROTON ATPASE SUBUNIT B, BRAIN ISOFORM"/>
    <property type="match status" value="1"/>
</dbReference>
<dbReference type="Pfam" id="PF00006">
    <property type="entry name" value="ATP-synt_ab"/>
    <property type="match status" value="1"/>
</dbReference>
<dbReference type="Pfam" id="PF02874">
    <property type="entry name" value="ATP-synt_ab_N"/>
    <property type="match status" value="1"/>
</dbReference>
<dbReference type="Pfam" id="PF22919">
    <property type="entry name" value="ATP-synt_VA_C"/>
    <property type="match status" value="1"/>
</dbReference>
<dbReference type="PIRSF" id="PIRSF039114">
    <property type="entry name" value="V-ATPsynth_beta/V-ATPase_B"/>
    <property type="match status" value="1"/>
</dbReference>
<dbReference type="SUPFAM" id="SSF52540">
    <property type="entry name" value="P-loop containing nucleoside triphosphate hydrolases"/>
    <property type="match status" value="1"/>
</dbReference>
<dbReference type="PROSITE" id="PS00152">
    <property type="entry name" value="ATPASE_ALPHA_BETA"/>
    <property type="match status" value="1"/>
</dbReference>
<protein>
    <recommendedName>
        <fullName>V-type proton ATPase subunit B, brain isoform</fullName>
        <shortName>V-ATPase subunit B 2</shortName>
    </recommendedName>
    <alternativeName>
        <fullName>Endomembrane proton pump 58 kDa subunit</fullName>
    </alternativeName>
    <alternativeName>
        <fullName>HO57</fullName>
    </alternativeName>
    <alternativeName>
        <fullName>Vacuolar proton pump subunit B 2</fullName>
    </alternativeName>
</protein>
<keyword id="KW-0002">3D-structure</keyword>
<keyword id="KW-0067">ATP-binding</keyword>
<keyword id="KW-1003">Cell membrane</keyword>
<keyword id="KW-0963">Cytoplasm</keyword>
<keyword id="KW-0968">Cytoplasmic vesicle</keyword>
<keyword id="KW-0209">Deafness</keyword>
<keyword id="KW-0225">Disease variant</keyword>
<keyword id="KW-0375">Hydrogen ion transport</keyword>
<keyword id="KW-0406">Ion transport</keyword>
<keyword id="KW-0472">Membrane</keyword>
<keyword id="KW-0547">Nucleotide-binding</keyword>
<keyword id="KW-1267">Proteomics identification</keyword>
<keyword id="KW-1185">Reference proteome</keyword>
<keyword id="KW-0770">Synapse</keyword>
<keyword id="KW-0813">Transport</keyword>
<proteinExistence type="evidence at protein level"/>